<reference key="1">
    <citation type="journal article" date="1995" name="J. Biol. Chem.">
        <title>The association of three subunits with yeast RNA polymerase is stabilized by A14.</title>
        <authorList>
            <person name="Smid A."/>
            <person name="Riva M."/>
            <person name="Bouet F."/>
            <person name="Sentenac A."/>
            <person name="Carles C."/>
        </authorList>
    </citation>
    <scope>NUCLEOTIDE SEQUENCE [GENOMIC DNA]</scope>
    <scope>PROTEIN SEQUENCE OF 17-22; 44-51 AND 95-112</scope>
    <source>
        <strain>ATCC 204508 / S288c</strain>
    </source>
</reference>
<reference key="2">
    <citation type="journal article" date="1997" name="Nature">
        <title>The nucleotide sequence of Saccharomyces cerevisiae chromosome IV.</title>
        <authorList>
            <person name="Jacq C."/>
            <person name="Alt-Moerbe J."/>
            <person name="Andre B."/>
            <person name="Arnold W."/>
            <person name="Bahr A."/>
            <person name="Ballesta J.P.G."/>
            <person name="Bargues M."/>
            <person name="Baron L."/>
            <person name="Becker A."/>
            <person name="Biteau N."/>
            <person name="Bloecker H."/>
            <person name="Blugeon C."/>
            <person name="Boskovic J."/>
            <person name="Brandt P."/>
            <person name="Brueckner M."/>
            <person name="Buitrago M.J."/>
            <person name="Coster F."/>
            <person name="Delaveau T."/>
            <person name="del Rey F."/>
            <person name="Dujon B."/>
            <person name="Eide L.G."/>
            <person name="Garcia-Cantalejo J.M."/>
            <person name="Goffeau A."/>
            <person name="Gomez-Peris A."/>
            <person name="Granotier C."/>
            <person name="Hanemann V."/>
            <person name="Hankeln T."/>
            <person name="Hoheisel J.D."/>
            <person name="Jaeger W."/>
            <person name="Jimenez A."/>
            <person name="Jonniaux J.-L."/>
            <person name="Kraemer C."/>
            <person name="Kuester H."/>
            <person name="Laamanen P."/>
            <person name="Legros Y."/>
            <person name="Louis E.J."/>
            <person name="Moeller-Rieker S."/>
            <person name="Monnet A."/>
            <person name="Moro M."/>
            <person name="Mueller-Auer S."/>
            <person name="Nussbaumer B."/>
            <person name="Paricio N."/>
            <person name="Paulin L."/>
            <person name="Perea J."/>
            <person name="Perez-Alonso M."/>
            <person name="Perez-Ortin J.E."/>
            <person name="Pohl T.M."/>
            <person name="Prydz H."/>
            <person name="Purnelle B."/>
            <person name="Rasmussen S.W."/>
            <person name="Remacha M.A."/>
            <person name="Revuelta J.L."/>
            <person name="Rieger M."/>
            <person name="Salom D."/>
            <person name="Saluz H.P."/>
            <person name="Saiz J.E."/>
            <person name="Saren A.-M."/>
            <person name="Schaefer M."/>
            <person name="Scharfe M."/>
            <person name="Schmidt E.R."/>
            <person name="Schneider C."/>
            <person name="Scholler P."/>
            <person name="Schwarz S."/>
            <person name="Soler-Mira A."/>
            <person name="Urrestarazu L.A."/>
            <person name="Verhasselt P."/>
            <person name="Vissers S."/>
            <person name="Voet M."/>
            <person name="Volckaert G."/>
            <person name="Wagner G."/>
            <person name="Wambutt R."/>
            <person name="Wedler E."/>
            <person name="Wedler H."/>
            <person name="Woelfl S."/>
            <person name="Harris D.E."/>
            <person name="Bowman S."/>
            <person name="Brown D."/>
            <person name="Churcher C.M."/>
            <person name="Connor R."/>
            <person name="Dedman K."/>
            <person name="Gentles S."/>
            <person name="Hamlin N."/>
            <person name="Hunt S."/>
            <person name="Jones L."/>
            <person name="McDonald S."/>
            <person name="Murphy L.D."/>
            <person name="Niblett D."/>
            <person name="Odell C."/>
            <person name="Oliver K."/>
            <person name="Rajandream M.A."/>
            <person name="Richards C."/>
            <person name="Shore L."/>
            <person name="Walsh S.V."/>
            <person name="Barrell B.G."/>
            <person name="Dietrich F.S."/>
            <person name="Mulligan J.T."/>
            <person name="Allen E."/>
            <person name="Araujo R."/>
            <person name="Aviles E."/>
            <person name="Berno A."/>
            <person name="Carpenter J."/>
            <person name="Chen E."/>
            <person name="Cherry J.M."/>
            <person name="Chung E."/>
            <person name="Duncan M."/>
            <person name="Hunicke-Smith S."/>
            <person name="Hyman R.W."/>
            <person name="Komp C."/>
            <person name="Lashkari D."/>
            <person name="Lew H."/>
            <person name="Lin D."/>
            <person name="Mosedale D."/>
            <person name="Nakahara K."/>
            <person name="Namath A."/>
            <person name="Oefner P."/>
            <person name="Oh C."/>
            <person name="Petel F.X."/>
            <person name="Roberts D."/>
            <person name="Schramm S."/>
            <person name="Schroeder M."/>
            <person name="Shogren T."/>
            <person name="Shroff N."/>
            <person name="Winant A."/>
            <person name="Yelton M.A."/>
            <person name="Botstein D."/>
            <person name="Davis R.W."/>
            <person name="Johnston M."/>
            <person name="Andrews S."/>
            <person name="Brinkman R."/>
            <person name="Cooper J."/>
            <person name="Ding H."/>
            <person name="Du Z."/>
            <person name="Favello A."/>
            <person name="Fulton L."/>
            <person name="Gattung S."/>
            <person name="Greco T."/>
            <person name="Hallsworth K."/>
            <person name="Hawkins J."/>
            <person name="Hillier L.W."/>
            <person name="Jier M."/>
            <person name="Johnson D."/>
            <person name="Johnston L."/>
            <person name="Kirsten J."/>
            <person name="Kucaba T."/>
            <person name="Langston Y."/>
            <person name="Latreille P."/>
            <person name="Le T."/>
            <person name="Mardis E."/>
            <person name="Menezes S."/>
            <person name="Miller N."/>
            <person name="Nhan M."/>
            <person name="Pauley A."/>
            <person name="Peluso D."/>
            <person name="Rifkin L."/>
            <person name="Riles L."/>
            <person name="Taich A."/>
            <person name="Trevaskis E."/>
            <person name="Vignati D."/>
            <person name="Wilcox L."/>
            <person name="Wohldman P."/>
            <person name="Vaudin M."/>
            <person name="Wilson R."/>
            <person name="Waterston R."/>
            <person name="Albermann K."/>
            <person name="Hani J."/>
            <person name="Heumann K."/>
            <person name="Kleine K."/>
            <person name="Mewes H.-W."/>
            <person name="Zollner A."/>
            <person name="Zaccaria P."/>
        </authorList>
    </citation>
    <scope>NUCLEOTIDE SEQUENCE [LARGE SCALE GENOMIC DNA]</scope>
    <source>
        <strain>ATCC 204508 / S288c</strain>
    </source>
</reference>
<reference key="3">
    <citation type="journal article" date="2014" name="G3 (Bethesda)">
        <title>The reference genome sequence of Saccharomyces cerevisiae: Then and now.</title>
        <authorList>
            <person name="Engel S.R."/>
            <person name="Dietrich F.S."/>
            <person name="Fisk D.G."/>
            <person name="Binkley G."/>
            <person name="Balakrishnan R."/>
            <person name="Costanzo M.C."/>
            <person name="Dwight S.S."/>
            <person name="Hitz B.C."/>
            <person name="Karra K."/>
            <person name="Nash R.S."/>
            <person name="Weng S."/>
            <person name="Wong E.D."/>
            <person name="Lloyd P."/>
            <person name="Skrzypek M.S."/>
            <person name="Miyasato S.R."/>
            <person name="Simison M."/>
            <person name="Cherry J.M."/>
        </authorList>
    </citation>
    <scope>GENOME REANNOTATION</scope>
    <source>
        <strain>ATCC 204508 / S288c</strain>
    </source>
</reference>
<reference key="4">
    <citation type="journal article" date="2007" name="Genome Res.">
        <title>Approaching a complete repository of sequence-verified protein-encoding clones for Saccharomyces cerevisiae.</title>
        <authorList>
            <person name="Hu Y."/>
            <person name="Rolfs A."/>
            <person name="Bhullar B."/>
            <person name="Murthy T.V.S."/>
            <person name="Zhu C."/>
            <person name="Berger M.F."/>
            <person name="Camargo A.A."/>
            <person name="Kelley F."/>
            <person name="McCarron S."/>
            <person name="Jepson D."/>
            <person name="Richardson A."/>
            <person name="Raphael J."/>
            <person name="Moreira D."/>
            <person name="Taycher E."/>
            <person name="Zuo D."/>
            <person name="Mohr S."/>
            <person name="Kane M.F."/>
            <person name="Williamson J."/>
            <person name="Simpson A.J.G."/>
            <person name="Bulyk M.L."/>
            <person name="Harlow E."/>
            <person name="Marsischky G."/>
            <person name="Kolodner R.D."/>
            <person name="LaBaer J."/>
        </authorList>
    </citation>
    <scope>NUCLEOTIDE SEQUENCE [GENOMIC DNA]</scope>
    <source>
        <strain>ATCC 204508 / S288c</strain>
    </source>
</reference>
<reference key="5">
    <citation type="journal article" date="2007" name="Proc. Natl. Acad. Sci. U.S.A.">
        <title>Analysis of phosphorylation sites on proteins from Saccharomyces cerevisiae by electron transfer dissociation (ETD) mass spectrometry.</title>
        <authorList>
            <person name="Chi A."/>
            <person name="Huttenhower C."/>
            <person name="Geer L.Y."/>
            <person name="Coon J.J."/>
            <person name="Syka J.E.P."/>
            <person name="Bai D.L."/>
            <person name="Shabanowitz J."/>
            <person name="Burke D.J."/>
            <person name="Troyanskaya O.G."/>
            <person name="Hunt D.F."/>
        </authorList>
    </citation>
    <scope>IDENTIFICATION BY MASS SPECTROMETRY [LARGE SCALE ANALYSIS]</scope>
</reference>
<reference key="6">
    <citation type="journal article" date="2008" name="Mol. Cell. Proteomics">
        <title>A multidimensional chromatography technology for in-depth phosphoproteome analysis.</title>
        <authorList>
            <person name="Albuquerque C.P."/>
            <person name="Smolka M.B."/>
            <person name="Payne S.H."/>
            <person name="Bafna V."/>
            <person name="Eng J."/>
            <person name="Zhou H."/>
        </authorList>
    </citation>
    <scope>IDENTIFICATION BY MASS SPECTROMETRY [LARGE SCALE ANALYSIS]</scope>
</reference>
<reference key="7">
    <citation type="journal article" date="2009" name="Science">
        <title>Global analysis of Cdk1 substrate phosphorylation sites provides insights into evolution.</title>
        <authorList>
            <person name="Holt L.J."/>
            <person name="Tuch B.B."/>
            <person name="Villen J."/>
            <person name="Johnson A.D."/>
            <person name="Gygi S.P."/>
            <person name="Morgan D.O."/>
        </authorList>
    </citation>
    <scope>PHOSPHORYLATION [LARGE SCALE ANALYSIS] AT SER-121</scope>
    <scope>IDENTIFICATION BY MASS SPECTROMETRY [LARGE SCALE ANALYSIS]</scope>
</reference>
<reference key="8">
    <citation type="journal article" date="2002" name="EMBO J.">
        <title>Localization of the yeast RNA polymerase I-specific subunits.</title>
        <authorList>
            <person name="Bischler N."/>
            <person name="Brino L."/>
            <person name="Carles C."/>
            <person name="Riva M."/>
            <person name="Tschochner H."/>
            <person name="Mallouh V."/>
            <person name="Schultz P."/>
        </authorList>
    </citation>
    <scope>ELECTRON MICROSCOPY OF THE RNA POLYMERASE I COMPLEX</scope>
</reference>
<reference key="9">
    <citation type="journal article" date="2002" name="Mol. Microbiol.">
        <title>Rpa12p, a conserved RNA polymerase I subunit with two functional domains.</title>
        <authorList>
            <person name="Van Mullem V."/>
            <person name="Landrieux E."/>
            <person name="Vandenhaute J."/>
            <person name="Thuriaux P."/>
        </authorList>
    </citation>
    <scope>IDENTIFICATION IN THE RNA POL I COMPLEX</scope>
</reference>
<reference key="10">
    <citation type="journal article" date="2002" name="Proc. Natl. Acad. Sci. U.S.A.">
        <title>The A14-A43 heterodimer subunit in yeast RNA pol I and their relationship to Rpb4-Rpb7 pol II subunits.</title>
        <authorList>
            <person name="Peyroche G."/>
            <person name="Levillain E."/>
            <person name="Siaut M."/>
            <person name="Callebaut I."/>
            <person name="Schultz P."/>
            <person name="Sentenac A."/>
            <person name="Riva M."/>
            <person name="Carles C."/>
        </authorList>
    </citation>
    <scope>INTERACTION WITH RPA43</scope>
</reference>
<reference key="11">
    <citation type="journal article" date="2003" name="Nature">
        <title>Global analysis of protein localization in budding yeast.</title>
        <authorList>
            <person name="Huh W.-K."/>
            <person name="Falvo J.V."/>
            <person name="Gerke L.C."/>
            <person name="Carroll A.S."/>
            <person name="Howson R.W."/>
            <person name="Weissman J.S."/>
            <person name="O'Shea E.K."/>
        </authorList>
    </citation>
    <scope>SUBCELLULAR LOCATION [LARGE SCALE ANALYSIS]</scope>
</reference>
<reference key="12">
    <citation type="journal article" date="2003" name="Nature">
        <title>Global analysis of protein expression in yeast.</title>
        <authorList>
            <person name="Ghaemmaghami S."/>
            <person name="Huh W.-K."/>
            <person name="Bower K."/>
            <person name="Howson R.W."/>
            <person name="Belle A."/>
            <person name="Dephoure N."/>
            <person name="O'Shea E.K."/>
            <person name="Weissman J.S."/>
        </authorList>
    </citation>
    <scope>LEVEL OF PROTEIN EXPRESSION [LARGE SCALE ANALYSIS]</scope>
</reference>
<reference key="13">
    <citation type="journal article" date="2003" name="Nucleic Acids Res.">
        <title>Structural and functional homology between the RNAP(I) subunits A14/A43 and the archaeal RNAP subunits E/F.</title>
        <authorList>
            <person name="Meka H."/>
            <person name="Daoust G."/>
            <person name="Arnvig K.B."/>
            <person name="Werner F."/>
            <person name="Brick P."/>
            <person name="Onesti S."/>
        </authorList>
    </citation>
    <scope>FUNCTION</scope>
</reference>
<reference key="14">
    <citation type="journal article" date="2007" name="Cell">
        <title>Functional architecture of RNA polymerase I.</title>
        <authorList>
            <person name="Kuhn C.D."/>
            <person name="Geiger S.R."/>
            <person name="Baumli S."/>
            <person name="Gartmann M."/>
            <person name="Gerber J."/>
            <person name="Jennebach S."/>
            <person name="Mielke T."/>
            <person name="Tschochner H."/>
            <person name="Beckmann R."/>
            <person name="Cramer P."/>
        </authorList>
    </citation>
    <scope>X-RAY CRYSTALLOGRAPHY (3.1 ANGSTROMS) OF 1-112</scope>
    <scope>STRUCTURE BY ELECTRON MICROSCOPY (12.00 ANGSTROMS)</scope>
    <scope>FUNCTION</scope>
    <scope>SUBUNIT</scope>
</reference>
<reference key="15">
    <citation type="journal article" date="2013" name="Nature">
        <title>Crystal structure of the 14-subunit RNA polymerase I.</title>
        <authorList>
            <person name="Fernandez-Tornero C."/>
            <person name="Moreno-Morcillo M."/>
            <person name="Rashid U.J."/>
            <person name="Taylor N.M."/>
            <person name="Ruiz F.M."/>
            <person name="Gruene T."/>
            <person name="Legrand P."/>
            <person name="Steuerwald U."/>
            <person name="Muller C.W."/>
        </authorList>
    </citation>
    <scope>X-RAY CRYSTALLOGRAPHY (3.0 ANGSTROMS) OF THE POL I COMPLEX</scope>
    <scope>FUNCTION</scope>
    <scope>SUBUNIT</scope>
</reference>
<reference key="16">
    <citation type="journal article" date="2013" name="Nature">
        <title>RNA polymerase I structure and transcription regulation.</title>
        <authorList>
            <person name="Engel C."/>
            <person name="Sainsbury S."/>
            <person name="Cheung A.C."/>
            <person name="Kostrewa D."/>
            <person name="Cramer P."/>
        </authorList>
    </citation>
    <scope>X-RAY CRYSTALLOGRAPHY (2.8 ANGSTROMS) OF THE POL I COMPLEX</scope>
    <scope>FUNCTION</scope>
    <scope>SUBUNIT</scope>
</reference>
<proteinExistence type="evidence at protein level"/>
<sequence length="137" mass="14585">MMKGSRRTGNNTATTLNTPVVIHATQLPQHVSTDEVLQFLESFIDEKENIIDSTTMNTISGNAADADAAAVANTSLNIDTNLSSSISQLKRIQRDFKGLPPAQDFSAAPIQVSTTEKKETSIGVSATGGKKTTFADE</sequence>
<comment type="function">
    <text evidence="3 6 7 8">DNA-dependent RNA polymerases catalyze the transcription of DNA into RNA using the four ribonucleoside triphosphates as substrates. Component of RNA polymerase I (Pol I) which synthesizes ribosomal RNA precursors. RPA14 seems to play a role in the stability of subunits RPO26 and RPA43. In vitro, the RPA14-RPA43 subcomplex binds single-stranded RNA.</text>
</comment>
<comment type="subunit">
    <text evidence="2 6 7 8">Component of the RNA polymerase I (Pol I) complex consisting of 14 subunits: RPA135, RPA190, RPC40, RPA14, RPB5, RPO26, RPA43, RPB8, RPA12, RPB10, RPC19, RPC10, RPA49 and RPA34. The complex is composed of a horseshoe-shaped core containing ten subunits (RPA135, RPA190, RPB5, RPO26, RPB8, RPB10, RPC10, RPA12, RPC19 and RPC40) where RPA135 and RPA190 form the DNA-binding cleft. Outside of the core, RPA14 and RPA43 form the stalk that mediates interactions with transcription initiation factors and newly synthesized RNA.</text>
</comment>
<comment type="interaction">
    <interactant intactId="EBI-15750">
        <id>P50106</id>
    </interactant>
    <interactant intactId="EBI-15745">
        <id>P46669</id>
        <label>RPA43</label>
    </interactant>
    <organismsDiffer>false</organismsDiffer>
    <experiments>3</experiments>
</comment>
<comment type="subcellular location">
    <subcellularLocation>
        <location evidence="4">Nucleus</location>
        <location evidence="4">Nucleolus</location>
    </subcellularLocation>
</comment>
<comment type="PTM">
    <text>The N-terminus is blocked.</text>
</comment>
<comment type="miscellaneous">
    <text evidence="5">Present with 3100 molecules/cell in log phase SD medium.</text>
</comment>
<accession>P50106</accession>
<accession>D6VSD7</accession>
<name>RPA14_YEAST</name>
<evidence type="ECO:0000256" key="1">
    <source>
        <dbReference type="SAM" id="MobiDB-lite"/>
    </source>
</evidence>
<evidence type="ECO:0000269" key="2">
    <source>
    </source>
</evidence>
<evidence type="ECO:0000269" key="3">
    <source>
    </source>
</evidence>
<evidence type="ECO:0000269" key="4">
    <source>
    </source>
</evidence>
<evidence type="ECO:0000269" key="5">
    <source>
    </source>
</evidence>
<evidence type="ECO:0000269" key="6">
    <source>
    </source>
</evidence>
<evidence type="ECO:0000269" key="7">
    <source>
    </source>
</evidence>
<evidence type="ECO:0000269" key="8">
    <source>
    </source>
</evidence>
<evidence type="ECO:0007744" key="9">
    <source>
    </source>
</evidence>
<evidence type="ECO:0007829" key="10">
    <source>
        <dbReference type="PDB" id="2RF4"/>
    </source>
</evidence>
<evidence type="ECO:0007829" key="11">
    <source>
        <dbReference type="PDB" id="6HKO"/>
    </source>
</evidence>
<evidence type="ECO:0007829" key="12">
    <source>
        <dbReference type="PDB" id="6RUI"/>
    </source>
</evidence>
<protein>
    <recommendedName>
        <fullName>DNA-directed RNA polymerase I subunit RPA14</fullName>
        <shortName>A14</shortName>
    </recommendedName>
    <alternativeName>
        <fullName>DNA-directed RNA polymerase I 14 kDa polypeptide</fullName>
    </alternativeName>
</protein>
<keyword id="KW-0002">3D-structure</keyword>
<keyword id="KW-0903">Direct protein sequencing</keyword>
<keyword id="KW-0240">DNA-directed RNA polymerase</keyword>
<keyword id="KW-0539">Nucleus</keyword>
<keyword id="KW-0597">Phosphoprotein</keyword>
<keyword id="KW-1185">Reference proteome</keyword>
<keyword id="KW-0690">Ribosome biogenesis</keyword>
<keyword id="KW-0804">Transcription</keyword>
<organism>
    <name type="scientific">Saccharomyces cerevisiae (strain ATCC 204508 / S288c)</name>
    <name type="common">Baker's yeast</name>
    <dbReference type="NCBI Taxonomy" id="559292"/>
    <lineage>
        <taxon>Eukaryota</taxon>
        <taxon>Fungi</taxon>
        <taxon>Dikarya</taxon>
        <taxon>Ascomycota</taxon>
        <taxon>Saccharomycotina</taxon>
        <taxon>Saccharomycetes</taxon>
        <taxon>Saccharomycetales</taxon>
        <taxon>Saccharomycetaceae</taxon>
        <taxon>Saccharomyces</taxon>
    </lineage>
</organism>
<gene>
    <name type="primary">RPA14</name>
    <name type="ordered locus">YDR156W</name>
    <name type="ORF">YD8358.11</name>
</gene>
<dbReference type="EMBL" id="U23208">
    <property type="protein sequence ID" value="AAA70171.1"/>
    <property type="molecule type" value="Genomic_DNA"/>
</dbReference>
<dbReference type="EMBL" id="Z50046">
    <property type="protein sequence ID" value="CAA90377.1"/>
    <property type="molecule type" value="Genomic_DNA"/>
</dbReference>
<dbReference type="EMBL" id="AY557664">
    <property type="protein sequence ID" value="AAS55990.1"/>
    <property type="molecule type" value="Genomic_DNA"/>
</dbReference>
<dbReference type="EMBL" id="BK006938">
    <property type="protein sequence ID" value="DAA11997.1"/>
    <property type="molecule type" value="Genomic_DNA"/>
</dbReference>
<dbReference type="PIR" id="S57981">
    <property type="entry name" value="S57981"/>
</dbReference>
<dbReference type="RefSeq" id="NP_010440.1">
    <property type="nucleotide sequence ID" value="NM_001180463.1"/>
</dbReference>
<dbReference type="PDB" id="2RF4">
    <property type="method" value="X-ray"/>
    <property type="resolution" value="3.10 A"/>
    <property type="chains" value="B/D/F=1-112"/>
</dbReference>
<dbReference type="PDB" id="4C2M">
    <property type="method" value="X-ray"/>
    <property type="resolution" value="2.80 A"/>
    <property type="chains" value="D/S=1-137"/>
</dbReference>
<dbReference type="PDB" id="4C3H">
    <property type="method" value="X-ray"/>
    <property type="resolution" value="3.27 A"/>
    <property type="chains" value="D=1-137"/>
</dbReference>
<dbReference type="PDB" id="4C3I">
    <property type="method" value="X-ray"/>
    <property type="resolution" value="3.00 A"/>
    <property type="chains" value="D=1-137"/>
</dbReference>
<dbReference type="PDB" id="4C3J">
    <property type="method" value="X-ray"/>
    <property type="resolution" value="3.35 A"/>
    <property type="chains" value="D=1-137"/>
</dbReference>
<dbReference type="PDB" id="4YM7">
    <property type="method" value="X-ray"/>
    <property type="resolution" value="5.50 A"/>
    <property type="chains" value="AD/BD/CD/DD/ED/FD=1-137"/>
</dbReference>
<dbReference type="PDB" id="5G5L">
    <property type="method" value="EM"/>
    <property type="resolution" value="4.80 A"/>
    <property type="chains" value="D=1-137"/>
</dbReference>
<dbReference type="PDB" id="5LMX">
    <property type="method" value="EM"/>
    <property type="resolution" value="4.90 A"/>
    <property type="chains" value="D=1-137"/>
</dbReference>
<dbReference type="PDB" id="5M3F">
    <property type="method" value="EM"/>
    <property type="resolution" value="3.80 A"/>
    <property type="chains" value="D=1-137"/>
</dbReference>
<dbReference type="PDB" id="5M3M">
    <property type="method" value="EM"/>
    <property type="resolution" value="4.00 A"/>
    <property type="chains" value="D=1-137"/>
</dbReference>
<dbReference type="PDB" id="5M5W">
    <property type="method" value="EM"/>
    <property type="resolution" value="3.80 A"/>
    <property type="chains" value="D=1-137"/>
</dbReference>
<dbReference type="PDB" id="5M5X">
    <property type="method" value="EM"/>
    <property type="resolution" value="4.00 A"/>
    <property type="chains" value="D=1-137"/>
</dbReference>
<dbReference type="PDB" id="5M5Y">
    <property type="method" value="EM"/>
    <property type="resolution" value="4.00 A"/>
    <property type="chains" value="D=1-137"/>
</dbReference>
<dbReference type="PDB" id="5M64">
    <property type="method" value="EM"/>
    <property type="resolution" value="4.60 A"/>
    <property type="chains" value="D=1-137"/>
</dbReference>
<dbReference type="PDB" id="5N5Y">
    <property type="method" value="EM"/>
    <property type="resolution" value="7.70 A"/>
    <property type="chains" value="D=1-137"/>
</dbReference>
<dbReference type="PDB" id="5N5Z">
    <property type="method" value="EM"/>
    <property type="resolution" value="7.70 A"/>
    <property type="chains" value="D=1-137"/>
</dbReference>
<dbReference type="PDB" id="5N60">
    <property type="method" value="EM"/>
    <property type="resolution" value="7.70 A"/>
    <property type="chains" value="D=1-137"/>
</dbReference>
<dbReference type="PDB" id="5N61">
    <property type="method" value="EM"/>
    <property type="resolution" value="3.40 A"/>
    <property type="chains" value="D=1-137"/>
</dbReference>
<dbReference type="PDB" id="5OA1">
    <property type="method" value="EM"/>
    <property type="resolution" value="4.40 A"/>
    <property type="chains" value="D=1-137"/>
</dbReference>
<dbReference type="PDB" id="5W5Y">
    <property type="method" value="EM"/>
    <property type="resolution" value="3.80 A"/>
    <property type="chains" value="D=1-137"/>
</dbReference>
<dbReference type="PDB" id="5W64">
    <property type="method" value="EM"/>
    <property type="resolution" value="4.20 A"/>
    <property type="chains" value="D=1-137"/>
</dbReference>
<dbReference type="PDB" id="5W65">
    <property type="method" value="EM"/>
    <property type="resolution" value="4.30 A"/>
    <property type="chains" value="D=1-137"/>
</dbReference>
<dbReference type="PDB" id="5W66">
    <property type="method" value="EM"/>
    <property type="resolution" value="3.90 A"/>
    <property type="chains" value="D=1-137"/>
</dbReference>
<dbReference type="PDB" id="6H67">
    <property type="method" value="EM"/>
    <property type="resolution" value="3.60 A"/>
    <property type="chains" value="D=1-137"/>
</dbReference>
<dbReference type="PDB" id="6H68">
    <property type="method" value="EM"/>
    <property type="resolution" value="4.60 A"/>
    <property type="chains" value="D=1-137"/>
</dbReference>
<dbReference type="PDB" id="6HKO">
    <property type="method" value="EM"/>
    <property type="resolution" value="3.42 A"/>
    <property type="chains" value="D=1-137"/>
</dbReference>
<dbReference type="PDB" id="6HLQ">
    <property type="method" value="EM"/>
    <property type="resolution" value="3.18 A"/>
    <property type="chains" value="D=1-137"/>
</dbReference>
<dbReference type="PDB" id="6HLR">
    <property type="method" value="EM"/>
    <property type="resolution" value="3.18 A"/>
    <property type="chains" value="D=1-137"/>
</dbReference>
<dbReference type="PDB" id="6HLS">
    <property type="method" value="EM"/>
    <property type="resolution" value="3.21 A"/>
    <property type="chains" value="D=1-137"/>
</dbReference>
<dbReference type="PDB" id="6RQH">
    <property type="method" value="EM"/>
    <property type="resolution" value="3.70 A"/>
    <property type="chains" value="D=1-137"/>
</dbReference>
<dbReference type="PDB" id="6RQL">
    <property type="method" value="EM"/>
    <property type="resolution" value="2.90 A"/>
    <property type="chains" value="D=1-137"/>
</dbReference>
<dbReference type="PDB" id="6RQT">
    <property type="method" value="EM"/>
    <property type="resolution" value="4.00 A"/>
    <property type="chains" value="D=1-137"/>
</dbReference>
<dbReference type="PDB" id="6RRD">
    <property type="method" value="EM"/>
    <property type="resolution" value="3.10 A"/>
    <property type="chains" value="D=1-137"/>
</dbReference>
<dbReference type="PDB" id="6RUI">
    <property type="method" value="EM"/>
    <property type="resolution" value="2.70 A"/>
    <property type="chains" value="D=1-137"/>
</dbReference>
<dbReference type="PDB" id="6RUO">
    <property type="method" value="EM"/>
    <property type="resolution" value="3.50 A"/>
    <property type="chains" value="D=1-137"/>
</dbReference>
<dbReference type="PDB" id="6RWE">
    <property type="method" value="EM"/>
    <property type="resolution" value="3.00 A"/>
    <property type="chains" value="D=1-137"/>
</dbReference>
<dbReference type="PDB" id="6TPS">
    <property type="method" value="EM"/>
    <property type="resolution" value="3.54 A"/>
    <property type="chains" value="D=1-137"/>
</dbReference>
<dbReference type="PDBsum" id="2RF4"/>
<dbReference type="PDBsum" id="4C2M"/>
<dbReference type="PDBsum" id="4C3H"/>
<dbReference type="PDBsum" id="4C3I"/>
<dbReference type="PDBsum" id="4C3J"/>
<dbReference type="PDBsum" id="4YM7"/>
<dbReference type="PDBsum" id="5G5L"/>
<dbReference type="PDBsum" id="5LMX"/>
<dbReference type="PDBsum" id="5M3F"/>
<dbReference type="PDBsum" id="5M3M"/>
<dbReference type="PDBsum" id="5M5W"/>
<dbReference type="PDBsum" id="5M5X"/>
<dbReference type="PDBsum" id="5M5Y"/>
<dbReference type="PDBsum" id="5M64"/>
<dbReference type="PDBsum" id="5N5Y"/>
<dbReference type="PDBsum" id="5N5Z"/>
<dbReference type="PDBsum" id="5N60"/>
<dbReference type="PDBsum" id="5N61"/>
<dbReference type="PDBsum" id="5OA1"/>
<dbReference type="PDBsum" id="5W5Y"/>
<dbReference type="PDBsum" id="5W64"/>
<dbReference type="PDBsum" id="5W65"/>
<dbReference type="PDBsum" id="5W66"/>
<dbReference type="PDBsum" id="6H67"/>
<dbReference type="PDBsum" id="6H68"/>
<dbReference type="PDBsum" id="6HKO"/>
<dbReference type="PDBsum" id="6HLQ"/>
<dbReference type="PDBsum" id="6HLR"/>
<dbReference type="PDBsum" id="6HLS"/>
<dbReference type="PDBsum" id="6RQH"/>
<dbReference type="PDBsum" id="6RQL"/>
<dbReference type="PDBsum" id="6RQT"/>
<dbReference type="PDBsum" id="6RRD"/>
<dbReference type="PDBsum" id="6RUI"/>
<dbReference type="PDBsum" id="6RUO"/>
<dbReference type="PDBsum" id="6RWE"/>
<dbReference type="PDBsum" id="6TPS"/>
<dbReference type="EMDB" id="EMD-0146"/>
<dbReference type="EMDB" id="EMD-0147"/>
<dbReference type="EMDB" id="EMD-0238"/>
<dbReference type="EMDB" id="EMD-0239"/>
<dbReference type="EMDB" id="EMD-0240"/>
<dbReference type="EMDB" id="EMD-0241"/>
<dbReference type="EMDB" id="EMD-10006"/>
<dbReference type="EMDB" id="EMD-10007"/>
<dbReference type="EMDB" id="EMD-10038"/>
<dbReference type="EMDB" id="EMD-10544"/>
<dbReference type="EMDB" id="EMD-3446"/>
<dbReference type="EMDB" id="EMD-3447"/>
<dbReference type="EMDB" id="EMD-3448"/>
<dbReference type="EMDB" id="EMD-3449"/>
<dbReference type="EMDB" id="EMD-3590"/>
<dbReference type="EMDB" id="EMD-3591"/>
<dbReference type="EMDB" id="EMD-3592"/>
<dbReference type="EMDB" id="EMD-3593"/>
<dbReference type="EMDB" id="EMD-3727"/>
<dbReference type="EMDB" id="EMD-4088"/>
<dbReference type="EMDB" id="EMD-4147"/>
<dbReference type="EMDB" id="EMD-4148"/>
<dbReference type="EMDB" id="EMD-4982"/>
<dbReference type="EMDB" id="EMD-4984"/>
<dbReference type="EMDB" id="EMD-4985"/>
<dbReference type="EMDB" id="EMD-4987"/>
<dbReference type="EMDB" id="EMD-8771"/>
<dbReference type="EMDB" id="EMD-8773"/>
<dbReference type="EMDB" id="EMD-8774"/>
<dbReference type="EMDB" id="EMD-8775"/>
<dbReference type="EMDB" id="EMD-8776"/>
<dbReference type="EMDB" id="EMD-8777"/>
<dbReference type="SMR" id="P50106"/>
<dbReference type="BioGRID" id="32208">
    <property type="interactions" value="445"/>
</dbReference>
<dbReference type="ComplexPortal" id="CPX-1664">
    <property type="entry name" value="DNA-directed RNA Polymerase I complex"/>
</dbReference>
<dbReference type="DIP" id="DIP-2053N"/>
<dbReference type="FunCoup" id="P50106">
    <property type="interactions" value="87"/>
</dbReference>
<dbReference type="IntAct" id="P50106">
    <property type="interactions" value="13"/>
</dbReference>
<dbReference type="MINT" id="P50106"/>
<dbReference type="STRING" id="4932.YDR156W"/>
<dbReference type="iPTMnet" id="P50106"/>
<dbReference type="PaxDb" id="4932-YDR156W"/>
<dbReference type="PeptideAtlas" id="P50106"/>
<dbReference type="EnsemblFungi" id="YDR156W_mRNA">
    <property type="protein sequence ID" value="YDR156W"/>
    <property type="gene ID" value="YDR156W"/>
</dbReference>
<dbReference type="GeneID" id="851734"/>
<dbReference type="KEGG" id="sce:YDR156W"/>
<dbReference type="AGR" id="SGD:S000002563"/>
<dbReference type="SGD" id="S000002563">
    <property type="gene designation" value="RPA14"/>
</dbReference>
<dbReference type="VEuPathDB" id="FungiDB:YDR156W"/>
<dbReference type="eggNOG" id="ENOG502S8XT">
    <property type="taxonomic scope" value="Eukaryota"/>
</dbReference>
<dbReference type="HOGENOM" id="CLU_132185_0_0_1"/>
<dbReference type="InParanoid" id="P50106"/>
<dbReference type="OMA" id="TPIVIHE"/>
<dbReference type="OrthoDB" id="4093689at2759"/>
<dbReference type="BioCyc" id="YEAST:G3O-29748-MONOMER"/>
<dbReference type="BioGRID-ORCS" id="851734">
    <property type="hits" value="1 hit in 10 CRISPR screens"/>
</dbReference>
<dbReference type="EvolutionaryTrace" id="P50106"/>
<dbReference type="PRO" id="PR:P50106"/>
<dbReference type="Proteomes" id="UP000002311">
    <property type="component" value="Chromosome IV"/>
</dbReference>
<dbReference type="RNAct" id="P50106">
    <property type="molecule type" value="protein"/>
</dbReference>
<dbReference type="GO" id="GO:0005634">
    <property type="term" value="C:nucleus"/>
    <property type="evidence" value="ECO:0000314"/>
    <property type="project" value="ComplexPortal"/>
</dbReference>
<dbReference type="GO" id="GO:0005736">
    <property type="term" value="C:RNA polymerase I complex"/>
    <property type="evidence" value="ECO:0000314"/>
    <property type="project" value="UniProtKB"/>
</dbReference>
<dbReference type="GO" id="GO:0003899">
    <property type="term" value="F:DNA-directed RNA polymerase activity"/>
    <property type="evidence" value="ECO:0000314"/>
    <property type="project" value="UniProtKB"/>
</dbReference>
<dbReference type="GO" id="GO:0042790">
    <property type="term" value="P:nucleolar large rRNA transcription by RNA polymerase I"/>
    <property type="evidence" value="ECO:0000314"/>
    <property type="project" value="ComplexPortal"/>
</dbReference>
<dbReference type="GO" id="GO:0008361">
    <property type="term" value="P:regulation of cell size"/>
    <property type="evidence" value="ECO:0007001"/>
    <property type="project" value="SGD"/>
</dbReference>
<dbReference type="GO" id="GO:0042254">
    <property type="term" value="P:ribosome biogenesis"/>
    <property type="evidence" value="ECO:0007669"/>
    <property type="project" value="UniProtKB-KW"/>
</dbReference>
<dbReference type="GO" id="GO:0006363">
    <property type="term" value="P:termination of RNA polymerase I transcription"/>
    <property type="evidence" value="ECO:0000314"/>
    <property type="project" value="ComplexPortal"/>
</dbReference>
<dbReference type="GO" id="GO:0006360">
    <property type="term" value="P:transcription by RNA polymerase I"/>
    <property type="evidence" value="ECO:0000314"/>
    <property type="project" value="UniProtKB"/>
</dbReference>
<dbReference type="GO" id="GO:0006362">
    <property type="term" value="P:transcription elongation by RNA polymerase I"/>
    <property type="evidence" value="ECO:0000314"/>
    <property type="project" value="ComplexPortal"/>
</dbReference>
<dbReference type="GO" id="GO:0006361">
    <property type="term" value="P:transcription initiation at RNA polymerase I promoter"/>
    <property type="evidence" value="ECO:0000314"/>
    <property type="project" value="ComplexPortal"/>
</dbReference>
<dbReference type="DisProt" id="DP00884"/>
<dbReference type="Gene3D" id="6.10.250.3390">
    <property type="match status" value="1"/>
</dbReference>
<dbReference type="InterPro" id="IPR013239">
    <property type="entry name" value="RNA_polI_Rpa14"/>
</dbReference>
<dbReference type="Pfam" id="PF08203">
    <property type="entry name" value="RNA_polI_A14"/>
    <property type="match status" value="1"/>
</dbReference>
<feature type="chain" id="PRO_0000073962" description="DNA-directed RNA polymerase I subunit RPA14">
    <location>
        <begin position="1"/>
        <end position="137"/>
    </location>
</feature>
<feature type="region of interest" description="Disordered" evidence="1">
    <location>
        <begin position="100"/>
        <end position="137"/>
    </location>
</feature>
<feature type="modified residue" description="Phosphoserine" evidence="9">
    <location>
        <position position="121"/>
    </location>
</feature>
<feature type="strand" evidence="12">
    <location>
        <begin position="4"/>
        <end position="6"/>
    </location>
</feature>
<feature type="turn" evidence="12">
    <location>
        <begin position="7"/>
        <end position="11"/>
    </location>
</feature>
<feature type="turn" evidence="12">
    <location>
        <begin position="15"/>
        <end position="17"/>
    </location>
</feature>
<feature type="strand" evidence="12">
    <location>
        <begin position="22"/>
        <end position="24"/>
    </location>
</feature>
<feature type="helix" evidence="12">
    <location>
        <begin position="33"/>
        <end position="46"/>
    </location>
</feature>
<feature type="strand" evidence="10">
    <location>
        <begin position="49"/>
        <end position="51"/>
    </location>
</feature>
<feature type="turn" evidence="12">
    <location>
        <begin position="83"/>
        <end position="85"/>
    </location>
</feature>
<feature type="helix" evidence="12">
    <location>
        <begin position="86"/>
        <end position="95"/>
    </location>
</feature>
<feature type="strand" evidence="11">
    <location>
        <begin position="96"/>
        <end position="98"/>
    </location>
</feature>